<name>SUCC_RICBR</name>
<protein>
    <recommendedName>
        <fullName evidence="1">Succinate--CoA ligase [ADP-forming] subunit beta</fullName>
        <ecNumber evidence="1">6.2.1.5</ecNumber>
    </recommendedName>
    <alternativeName>
        <fullName evidence="1">Succinyl-CoA synthetase subunit beta</fullName>
        <shortName evidence="1">SCS-beta</shortName>
    </alternativeName>
</protein>
<gene>
    <name evidence="1" type="primary">sucC</name>
    <name type="ordered locus">RBE_1228</name>
</gene>
<feature type="chain" id="PRO_0000277952" description="Succinate--CoA ligase [ADP-forming] subunit beta">
    <location>
        <begin position="1"/>
        <end position="385"/>
    </location>
</feature>
<feature type="domain" description="ATP-grasp" evidence="1">
    <location>
        <begin position="9"/>
        <end position="244"/>
    </location>
</feature>
<feature type="binding site" evidence="1">
    <location>
        <position position="46"/>
    </location>
    <ligand>
        <name>ATP</name>
        <dbReference type="ChEBI" id="CHEBI:30616"/>
    </ligand>
</feature>
<feature type="binding site" evidence="1">
    <location>
        <begin position="53"/>
        <end position="55"/>
    </location>
    <ligand>
        <name>ATP</name>
        <dbReference type="ChEBI" id="CHEBI:30616"/>
    </ligand>
</feature>
<feature type="binding site" evidence="1">
    <location>
        <position position="99"/>
    </location>
    <ligand>
        <name>ATP</name>
        <dbReference type="ChEBI" id="CHEBI:30616"/>
    </ligand>
</feature>
<feature type="binding site" evidence="1">
    <location>
        <position position="102"/>
    </location>
    <ligand>
        <name>ATP</name>
        <dbReference type="ChEBI" id="CHEBI:30616"/>
    </ligand>
</feature>
<feature type="binding site" evidence="1">
    <location>
        <position position="107"/>
    </location>
    <ligand>
        <name>ATP</name>
        <dbReference type="ChEBI" id="CHEBI:30616"/>
    </ligand>
</feature>
<feature type="binding site" evidence="1">
    <location>
        <position position="199"/>
    </location>
    <ligand>
        <name>Mg(2+)</name>
        <dbReference type="ChEBI" id="CHEBI:18420"/>
    </ligand>
</feature>
<feature type="binding site" evidence="1">
    <location>
        <position position="213"/>
    </location>
    <ligand>
        <name>Mg(2+)</name>
        <dbReference type="ChEBI" id="CHEBI:18420"/>
    </ligand>
</feature>
<feature type="binding site" evidence="1">
    <location>
        <position position="264"/>
    </location>
    <ligand>
        <name>substrate</name>
        <note>ligand shared with subunit alpha</note>
    </ligand>
</feature>
<feature type="binding site" evidence="1">
    <location>
        <begin position="321"/>
        <end position="323"/>
    </location>
    <ligand>
        <name>substrate</name>
        <note>ligand shared with subunit alpha</note>
    </ligand>
</feature>
<evidence type="ECO:0000255" key="1">
    <source>
        <dbReference type="HAMAP-Rule" id="MF_00558"/>
    </source>
</evidence>
<organism>
    <name type="scientific">Rickettsia bellii (strain RML369-C)</name>
    <dbReference type="NCBI Taxonomy" id="336407"/>
    <lineage>
        <taxon>Bacteria</taxon>
        <taxon>Pseudomonadati</taxon>
        <taxon>Pseudomonadota</taxon>
        <taxon>Alphaproteobacteria</taxon>
        <taxon>Rickettsiales</taxon>
        <taxon>Rickettsiaceae</taxon>
        <taxon>Rickettsieae</taxon>
        <taxon>Rickettsia</taxon>
        <taxon>belli group</taxon>
    </lineage>
</organism>
<keyword id="KW-0067">ATP-binding</keyword>
<keyword id="KW-0436">Ligase</keyword>
<keyword id="KW-0460">Magnesium</keyword>
<keyword id="KW-0479">Metal-binding</keyword>
<keyword id="KW-0547">Nucleotide-binding</keyword>
<keyword id="KW-0816">Tricarboxylic acid cycle</keyword>
<dbReference type="EC" id="6.2.1.5" evidence="1"/>
<dbReference type="EMBL" id="CP000087">
    <property type="protein sequence ID" value="ABE05309.1"/>
    <property type="molecule type" value="Genomic_DNA"/>
</dbReference>
<dbReference type="RefSeq" id="WP_011477884.1">
    <property type="nucleotide sequence ID" value="NC_007940.1"/>
</dbReference>
<dbReference type="SMR" id="Q1RH55"/>
<dbReference type="KEGG" id="rbe:RBE_1228"/>
<dbReference type="eggNOG" id="COG0045">
    <property type="taxonomic scope" value="Bacteria"/>
</dbReference>
<dbReference type="HOGENOM" id="CLU_037430_0_2_5"/>
<dbReference type="OrthoDB" id="9802602at2"/>
<dbReference type="UniPathway" id="UPA00223">
    <property type="reaction ID" value="UER00999"/>
</dbReference>
<dbReference type="Proteomes" id="UP000001951">
    <property type="component" value="Chromosome"/>
</dbReference>
<dbReference type="GO" id="GO:0005829">
    <property type="term" value="C:cytosol"/>
    <property type="evidence" value="ECO:0007669"/>
    <property type="project" value="TreeGrafter"/>
</dbReference>
<dbReference type="GO" id="GO:0042709">
    <property type="term" value="C:succinate-CoA ligase complex"/>
    <property type="evidence" value="ECO:0007669"/>
    <property type="project" value="TreeGrafter"/>
</dbReference>
<dbReference type="GO" id="GO:0005524">
    <property type="term" value="F:ATP binding"/>
    <property type="evidence" value="ECO:0007669"/>
    <property type="project" value="UniProtKB-UniRule"/>
</dbReference>
<dbReference type="GO" id="GO:0000287">
    <property type="term" value="F:magnesium ion binding"/>
    <property type="evidence" value="ECO:0007669"/>
    <property type="project" value="UniProtKB-UniRule"/>
</dbReference>
<dbReference type="GO" id="GO:0004775">
    <property type="term" value="F:succinate-CoA ligase (ADP-forming) activity"/>
    <property type="evidence" value="ECO:0007669"/>
    <property type="project" value="UniProtKB-UniRule"/>
</dbReference>
<dbReference type="GO" id="GO:0004776">
    <property type="term" value="F:succinate-CoA ligase (GDP-forming) activity"/>
    <property type="evidence" value="ECO:0007669"/>
    <property type="project" value="RHEA"/>
</dbReference>
<dbReference type="GO" id="GO:0006104">
    <property type="term" value="P:succinyl-CoA metabolic process"/>
    <property type="evidence" value="ECO:0007669"/>
    <property type="project" value="TreeGrafter"/>
</dbReference>
<dbReference type="GO" id="GO:0006099">
    <property type="term" value="P:tricarboxylic acid cycle"/>
    <property type="evidence" value="ECO:0007669"/>
    <property type="project" value="UniProtKB-UniRule"/>
</dbReference>
<dbReference type="FunFam" id="3.30.1490.20:FF:000002">
    <property type="entry name" value="Succinate--CoA ligase [ADP-forming] subunit beta"/>
    <property type="match status" value="1"/>
</dbReference>
<dbReference type="FunFam" id="3.30.470.20:FF:000002">
    <property type="entry name" value="Succinate--CoA ligase [ADP-forming] subunit beta"/>
    <property type="match status" value="1"/>
</dbReference>
<dbReference type="FunFam" id="3.40.50.261:FF:000001">
    <property type="entry name" value="Succinate--CoA ligase [ADP-forming] subunit beta"/>
    <property type="match status" value="1"/>
</dbReference>
<dbReference type="Gene3D" id="3.30.1490.20">
    <property type="entry name" value="ATP-grasp fold, A domain"/>
    <property type="match status" value="1"/>
</dbReference>
<dbReference type="Gene3D" id="3.30.470.20">
    <property type="entry name" value="ATP-grasp fold, B domain"/>
    <property type="match status" value="1"/>
</dbReference>
<dbReference type="Gene3D" id="3.40.50.261">
    <property type="entry name" value="Succinyl-CoA synthetase domains"/>
    <property type="match status" value="1"/>
</dbReference>
<dbReference type="HAMAP" id="MF_00558">
    <property type="entry name" value="Succ_CoA_beta"/>
    <property type="match status" value="1"/>
</dbReference>
<dbReference type="InterPro" id="IPR011761">
    <property type="entry name" value="ATP-grasp"/>
</dbReference>
<dbReference type="InterPro" id="IPR013650">
    <property type="entry name" value="ATP-grasp_succ-CoA_synth-type"/>
</dbReference>
<dbReference type="InterPro" id="IPR013815">
    <property type="entry name" value="ATP_grasp_subdomain_1"/>
</dbReference>
<dbReference type="InterPro" id="IPR017866">
    <property type="entry name" value="Succ-CoA_synthase_bsu_CS"/>
</dbReference>
<dbReference type="InterPro" id="IPR005811">
    <property type="entry name" value="SUCC_ACL_C"/>
</dbReference>
<dbReference type="InterPro" id="IPR005809">
    <property type="entry name" value="Succ_CoA_ligase-like_bsu"/>
</dbReference>
<dbReference type="InterPro" id="IPR016102">
    <property type="entry name" value="Succinyl-CoA_synth-like"/>
</dbReference>
<dbReference type="NCBIfam" id="NF001913">
    <property type="entry name" value="PRK00696.1"/>
    <property type="match status" value="1"/>
</dbReference>
<dbReference type="NCBIfam" id="TIGR01016">
    <property type="entry name" value="sucCoAbeta"/>
    <property type="match status" value="1"/>
</dbReference>
<dbReference type="PANTHER" id="PTHR11815:SF10">
    <property type="entry name" value="SUCCINATE--COA LIGASE [GDP-FORMING] SUBUNIT BETA, MITOCHONDRIAL"/>
    <property type="match status" value="1"/>
</dbReference>
<dbReference type="PANTHER" id="PTHR11815">
    <property type="entry name" value="SUCCINYL-COA SYNTHETASE BETA CHAIN"/>
    <property type="match status" value="1"/>
</dbReference>
<dbReference type="Pfam" id="PF08442">
    <property type="entry name" value="ATP-grasp_2"/>
    <property type="match status" value="1"/>
</dbReference>
<dbReference type="Pfam" id="PF00549">
    <property type="entry name" value="Ligase_CoA"/>
    <property type="match status" value="1"/>
</dbReference>
<dbReference type="PIRSF" id="PIRSF001554">
    <property type="entry name" value="SucCS_beta"/>
    <property type="match status" value="1"/>
</dbReference>
<dbReference type="SUPFAM" id="SSF56059">
    <property type="entry name" value="Glutathione synthetase ATP-binding domain-like"/>
    <property type="match status" value="1"/>
</dbReference>
<dbReference type="SUPFAM" id="SSF52210">
    <property type="entry name" value="Succinyl-CoA synthetase domains"/>
    <property type="match status" value="1"/>
</dbReference>
<dbReference type="PROSITE" id="PS50975">
    <property type="entry name" value="ATP_GRASP"/>
    <property type="match status" value="1"/>
</dbReference>
<dbReference type="PROSITE" id="PS01217">
    <property type="entry name" value="SUCCINYL_COA_LIG_3"/>
    <property type="match status" value="1"/>
</dbReference>
<comment type="function">
    <text evidence="1">Succinyl-CoA synthetase functions in the citric acid cycle (TCA), coupling the hydrolysis of succinyl-CoA to the synthesis of either ATP or GTP and thus represents the only step of substrate-level phosphorylation in the TCA. The beta subunit provides nucleotide specificity of the enzyme and binds the substrate succinate, while the binding sites for coenzyme A and phosphate are found in the alpha subunit.</text>
</comment>
<comment type="catalytic activity">
    <reaction evidence="1">
        <text>succinate + ATP + CoA = succinyl-CoA + ADP + phosphate</text>
        <dbReference type="Rhea" id="RHEA:17661"/>
        <dbReference type="ChEBI" id="CHEBI:30031"/>
        <dbReference type="ChEBI" id="CHEBI:30616"/>
        <dbReference type="ChEBI" id="CHEBI:43474"/>
        <dbReference type="ChEBI" id="CHEBI:57287"/>
        <dbReference type="ChEBI" id="CHEBI:57292"/>
        <dbReference type="ChEBI" id="CHEBI:456216"/>
        <dbReference type="EC" id="6.2.1.5"/>
    </reaction>
    <physiologicalReaction direction="right-to-left" evidence="1">
        <dbReference type="Rhea" id="RHEA:17663"/>
    </physiologicalReaction>
</comment>
<comment type="catalytic activity">
    <reaction evidence="1">
        <text>GTP + succinate + CoA = succinyl-CoA + GDP + phosphate</text>
        <dbReference type="Rhea" id="RHEA:22120"/>
        <dbReference type="ChEBI" id="CHEBI:30031"/>
        <dbReference type="ChEBI" id="CHEBI:37565"/>
        <dbReference type="ChEBI" id="CHEBI:43474"/>
        <dbReference type="ChEBI" id="CHEBI:57287"/>
        <dbReference type="ChEBI" id="CHEBI:57292"/>
        <dbReference type="ChEBI" id="CHEBI:58189"/>
    </reaction>
    <physiologicalReaction direction="right-to-left" evidence="1">
        <dbReference type="Rhea" id="RHEA:22122"/>
    </physiologicalReaction>
</comment>
<comment type="cofactor">
    <cofactor evidence="1">
        <name>Mg(2+)</name>
        <dbReference type="ChEBI" id="CHEBI:18420"/>
    </cofactor>
    <text evidence="1">Binds 1 Mg(2+) ion per subunit.</text>
</comment>
<comment type="pathway">
    <text evidence="1">Carbohydrate metabolism; tricarboxylic acid cycle; succinate from succinyl-CoA (ligase route): step 1/1.</text>
</comment>
<comment type="subunit">
    <text evidence="1">Heterotetramer of two alpha and two beta subunits.</text>
</comment>
<comment type="similarity">
    <text evidence="1">Belongs to the succinate/malate CoA ligase beta subunit family.</text>
</comment>
<reference key="1">
    <citation type="journal article" date="2006" name="PLoS Genet.">
        <title>Genome sequence of Rickettsia bellii illuminates the role of amoebae in gene exchanges between intracellular pathogens.</title>
        <authorList>
            <person name="Ogata H."/>
            <person name="La Scola B."/>
            <person name="Audic S."/>
            <person name="Renesto P."/>
            <person name="Blanc G."/>
            <person name="Robert C."/>
            <person name="Fournier P.-E."/>
            <person name="Claverie J.-M."/>
            <person name="Raoult D."/>
        </authorList>
    </citation>
    <scope>NUCLEOTIDE SEQUENCE [LARGE SCALE GENOMIC DNA]</scope>
    <source>
        <strain>RML369-C</strain>
    </source>
</reference>
<sequence length="385" mass="41594">MNIHEYQAKEILRKYGVPTSTGVVVTKTESINAAIDELNTKVYVVKAQIHAGGRGKAGGVKVVKSKEEAKKVAHDMFGINLVTHQTGPQGQKVNRLYIESGCDILKEYYFSVVFDRSASCITFIASTEGGVDIEEVAEKTPEKIIKFSVDPATGLQNFHAQGIAYELGFKDHQVKQMKEIVKATYKAFIETDAAQIEINPLIVNKEGNLLALDAKFTFDDNGLFKHPEIMALRDQDEEDPLETRAADAGLSYVKMDGSIGCMVNGAGLAMATMDIIKLYGATPANFLDVGGGADRERVKEALKIILSDKEVKGILVNIFGGIMRCDIIAEGIIAAAKDIGIKVPLVVRLAGTNVEKGKEILSNSGLEIIPAHDLADAASKIVEAI</sequence>
<proteinExistence type="inferred from homology"/>
<accession>Q1RH55</accession>